<evidence type="ECO:0000255" key="1">
    <source>
        <dbReference type="HAMAP-Rule" id="MF_01374"/>
    </source>
</evidence>
<organism>
    <name type="scientific">Mannheimia succiniciproducens (strain KCTC 0769BP / MBEL55E)</name>
    <dbReference type="NCBI Taxonomy" id="221988"/>
    <lineage>
        <taxon>Bacteria</taxon>
        <taxon>Pseudomonadati</taxon>
        <taxon>Pseudomonadota</taxon>
        <taxon>Gammaproteobacteria</taxon>
        <taxon>Pasteurellales</taxon>
        <taxon>Pasteurellaceae</taxon>
        <taxon>Basfia</taxon>
    </lineage>
</organism>
<comment type="function">
    <text evidence="1">Thiolesterase that catalyzes the hydrolysis of S-D-lactoyl-glutathione to form glutathione and D-lactic acid.</text>
</comment>
<comment type="catalytic activity">
    <reaction evidence="1">
        <text>an S-(2-hydroxyacyl)glutathione + H2O = a 2-hydroxy carboxylate + glutathione + H(+)</text>
        <dbReference type="Rhea" id="RHEA:21864"/>
        <dbReference type="ChEBI" id="CHEBI:15377"/>
        <dbReference type="ChEBI" id="CHEBI:15378"/>
        <dbReference type="ChEBI" id="CHEBI:57925"/>
        <dbReference type="ChEBI" id="CHEBI:58896"/>
        <dbReference type="ChEBI" id="CHEBI:71261"/>
        <dbReference type="EC" id="3.1.2.6"/>
    </reaction>
</comment>
<comment type="cofactor">
    <cofactor evidence="1">
        <name>Zn(2+)</name>
        <dbReference type="ChEBI" id="CHEBI:29105"/>
    </cofactor>
    <text evidence="1">Binds 2 Zn(2+) ions per subunit.</text>
</comment>
<comment type="pathway">
    <text evidence="1">Secondary metabolite metabolism; methylglyoxal degradation; (R)-lactate from methylglyoxal: step 2/2.</text>
</comment>
<comment type="subunit">
    <text evidence="1">Monomer.</text>
</comment>
<comment type="similarity">
    <text evidence="1">Belongs to the metallo-beta-lactamase superfamily. Glyoxalase II family.</text>
</comment>
<name>GLO2_MANSM</name>
<dbReference type="EC" id="3.1.2.6" evidence="1"/>
<dbReference type="EMBL" id="AE016827">
    <property type="protein sequence ID" value="AAU37553.1"/>
    <property type="molecule type" value="Genomic_DNA"/>
</dbReference>
<dbReference type="RefSeq" id="WP_011200123.1">
    <property type="nucleotide sequence ID" value="NC_006300.1"/>
</dbReference>
<dbReference type="SMR" id="Q65U07"/>
<dbReference type="STRING" id="221988.MS0946"/>
<dbReference type="KEGG" id="msu:MS0946"/>
<dbReference type="eggNOG" id="COG0491">
    <property type="taxonomic scope" value="Bacteria"/>
</dbReference>
<dbReference type="HOGENOM" id="CLU_030571_4_1_6"/>
<dbReference type="OrthoDB" id="9802248at2"/>
<dbReference type="UniPathway" id="UPA00619">
    <property type="reaction ID" value="UER00676"/>
</dbReference>
<dbReference type="Proteomes" id="UP000000607">
    <property type="component" value="Chromosome"/>
</dbReference>
<dbReference type="GO" id="GO:0004416">
    <property type="term" value="F:hydroxyacylglutathione hydrolase activity"/>
    <property type="evidence" value="ECO:0007669"/>
    <property type="project" value="UniProtKB-UniRule"/>
</dbReference>
<dbReference type="GO" id="GO:0046872">
    <property type="term" value="F:metal ion binding"/>
    <property type="evidence" value="ECO:0007669"/>
    <property type="project" value="UniProtKB-KW"/>
</dbReference>
<dbReference type="GO" id="GO:0019243">
    <property type="term" value="P:methylglyoxal catabolic process to D-lactate via S-lactoyl-glutathione"/>
    <property type="evidence" value="ECO:0007669"/>
    <property type="project" value="InterPro"/>
</dbReference>
<dbReference type="CDD" id="cd07723">
    <property type="entry name" value="hydroxyacylglutathione_hydrolase_MBL-fold"/>
    <property type="match status" value="1"/>
</dbReference>
<dbReference type="Gene3D" id="3.60.15.10">
    <property type="entry name" value="Ribonuclease Z/Hydroxyacylglutathione hydrolase-like"/>
    <property type="match status" value="1"/>
</dbReference>
<dbReference type="HAMAP" id="MF_01374">
    <property type="entry name" value="Glyoxalase_2"/>
    <property type="match status" value="1"/>
</dbReference>
<dbReference type="InterPro" id="IPR035680">
    <property type="entry name" value="Clx_II_MBL"/>
</dbReference>
<dbReference type="InterPro" id="IPR050110">
    <property type="entry name" value="Glyoxalase_II_hydrolase"/>
</dbReference>
<dbReference type="InterPro" id="IPR032282">
    <property type="entry name" value="HAGH_C"/>
</dbReference>
<dbReference type="InterPro" id="IPR017782">
    <property type="entry name" value="Hydroxyacylglutathione_Hdrlase"/>
</dbReference>
<dbReference type="InterPro" id="IPR001279">
    <property type="entry name" value="Metallo-B-lactamas"/>
</dbReference>
<dbReference type="InterPro" id="IPR036866">
    <property type="entry name" value="RibonucZ/Hydroxyglut_hydro"/>
</dbReference>
<dbReference type="NCBIfam" id="TIGR03413">
    <property type="entry name" value="GSH_gloB"/>
    <property type="match status" value="1"/>
</dbReference>
<dbReference type="PANTHER" id="PTHR43705">
    <property type="entry name" value="HYDROXYACYLGLUTATHIONE HYDROLASE"/>
    <property type="match status" value="1"/>
</dbReference>
<dbReference type="PANTHER" id="PTHR43705:SF1">
    <property type="entry name" value="HYDROXYACYLGLUTATHIONE HYDROLASE GLOB"/>
    <property type="match status" value="1"/>
</dbReference>
<dbReference type="Pfam" id="PF16123">
    <property type="entry name" value="HAGH_C"/>
    <property type="match status" value="1"/>
</dbReference>
<dbReference type="Pfam" id="PF00753">
    <property type="entry name" value="Lactamase_B"/>
    <property type="match status" value="2"/>
</dbReference>
<dbReference type="SMART" id="SM00849">
    <property type="entry name" value="Lactamase_B"/>
    <property type="match status" value="1"/>
</dbReference>
<dbReference type="SUPFAM" id="SSF56281">
    <property type="entry name" value="Metallo-hydrolase/oxidoreductase"/>
    <property type="match status" value="1"/>
</dbReference>
<proteinExistence type="inferred from homology"/>
<accession>Q65U07</accession>
<reference key="1">
    <citation type="journal article" date="2004" name="Nat. Biotechnol.">
        <title>The genome sequence of the capnophilic rumen bacterium Mannheimia succiniciproducens.</title>
        <authorList>
            <person name="Hong S.H."/>
            <person name="Kim J.S."/>
            <person name="Lee S.Y."/>
            <person name="In Y.H."/>
            <person name="Choi S.S."/>
            <person name="Rih J.-K."/>
            <person name="Kim C.H."/>
            <person name="Jeong H."/>
            <person name="Hur C.G."/>
            <person name="Kim J.J."/>
        </authorList>
    </citation>
    <scope>NUCLEOTIDE SEQUENCE [LARGE SCALE GENOMIC DNA]</scope>
    <source>
        <strain>KCTC 0769BP / MBEL55E</strain>
    </source>
</reference>
<gene>
    <name evidence="1" type="primary">gloB</name>
    <name type="ordered locus">MS0946</name>
</gene>
<sequence>MLVPIPALNDNYIWLYGRENLPVIAIDVAECKNLSAYLTQHHLQLEAVLLTHYHDDHTGGVEELKRYYPDIPVYGPAETADKGATHIVNEGNIQTAHYRIEVVPSGGHTANHVSYLIDNHLFCGDTLFSAGCGRVFTGDYGQMFESITRLKQLPDKTVICPAHEYTLSNLVFAEAFAPNEKVKSAVKNQRISVESLRAQNKPSLPTTLALEKNINPFLQAENLADFIYLRKAKDNF</sequence>
<keyword id="KW-0378">Hydrolase</keyword>
<keyword id="KW-0479">Metal-binding</keyword>
<keyword id="KW-0862">Zinc</keyword>
<protein>
    <recommendedName>
        <fullName evidence="1">Hydroxyacylglutathione hydrolase</fullName>
        <ecNumber evidence="1">3.1.2.6</ecNumber>
    </recommendedName>
    <alternativeName>
        <fullName evidence="1">Glyoxalase II</fullName>
        <shortName evidence="1">Glx II</shortName>
    </alternativeName>
</protein>
<feature type="chain" id="PRO_0000309658" description="Hydroxyacylglutathione hydrolase">
    <location>
        <begin position="1"/>
        <end position="236"/>
    </location>
</feature>
<feature type="binding site" evidence="1">
    <location>
        <position position="52"/>
    </location>
    <ligand>
        <name>Zn(2+)</name>
        <dbReference type="ChEBI" id="CHEBI:29105"/>
        <label>1</label>
    </ligand>
</feature>
<feature type="binding site" evidence="1">
    <location>
        <position position="54"/>
    </location>
    <ligand>
        <name>Zn(2+)</name>
        <dbReference type="ChEBI" id="CHEBI:29105"/>
        <label>1</label>
    </ligand>
</feature>
<feature type="binding site" evidence="1">
    <location>
        <position position="56"/>
    </location>
    <ligand>
        <name>Zn(2+)</name>
        <dbReference type="ChEBI" id="CHEBI:29105"/>
        <label>2</label>
    </ligand>
</feature>
<feature type="binding site" evidence="1">
    <location>
        <position position="57"/>
    </location>
    <ligand>
        <name>Zn(2+)</name>
        <dbReference type="ChEBI" id="CHEBI:29105"/>
        <label>2</label>
    </ligand>
</feature>
<feature type="binding site" evidence="1">
    <location>
        <position position="108"/>
    </location>
    <ligand>
        <name>Zn(2+)</name>
        <dbReference type="ChEBI" id="CHEBI:29105"/>
        <label>1</label>
    </ligand>
</feature>
<feature type="binding site" evidence="1">
    <location>
        <position position="125"/>
    </location>
    <ligand>
        <name>Zn(2+)</name>
        <dbReference type="ChEBI" id="CHEBI:29105"/>
        <label>1</label>
    </ligand>
</feature>
<feature type="binding site" evidence="1">
    <location>
        <position position="125"/>
    </location>
    <ligand>
        <name>Zn(2+)</name>
        <dbReference type="ChEBI" id="CHEBI:29105"/>
        <label>2</label>
    </ligand>
</feature>
<feature type="binding site" evidence="1">
    <location>
        <position position="163"/>
    </location>
    <ligand>
        <name>Zn(2+)</name>
        <dbReference type="ChEBI" id="CHEBI:29105"/>
        <label>2</label>
    </ligand>
</feature>